<comment type="subcellular location">
    <subcellularLocation>
        <location>Plastid</location>
        <location>Chloroplast</location>
    </subcellularLocation>
</comment>
<comment type="similarity">
    <text evidence="1">Belongs to the bacterial ribosomal protein bL32 family.</text>
</comment>
<dbReference type="EMBL" id="AF137379">
    <property type="protein sequence ID" value="AAD54898.1"/>
    <property type="molecule type" value="Genomic_DNA"/>
</dbReference>
<dbReference type="RefSeq" id="NP_050927.1">
    <property type="nucleotide sequence ID" value="NC_000927.1"/>
</dbReference>
<dbReference type="SMR" id="Q9TKU9"/>
<dbReference type="GeneID" id="801928"/>
<dbReference type="GO" id="GO:0009507">
    <property type="term" value="C:chloroplast"/>
    <property type="evidence" value="ECO:0007669"/>
    <property type="project" value="UniProtKB-SubCell"/>
</dbReference>
<dbReference type="GO" id="GO:0015934">
    <property type="term" value="C:large ribosomal subunit"/>
    <property type="evidence" value="ECO:0007669"/>
    <property type="project" value="InterPro"/>
</dbReference>
<dbReference type="GO" id="GO:0003735">
    <property type="term" value="F:structural constituent of ribosome"/>
    <property type="evidence" value="ECO:0007669"/>
    <property type="project" value="InterPro"/>
</dbReference>
<dbReference type="GO" id="GO:0006412">
    <property type="term" value="P:translation"/>
    <property type="evidence" value="ECO:0007669"/>
    <property type="project" value="UniProtKB-UniRule"/>
</dbReference>
<dbReference type="HAMAP" id="MF_00340">
    <property type="entry name" value="Ribosomal_bL32"/>
    <property type="match status" value="1"/>
</dbReference>
<dbReference type="InterPro" id="IPR002677">
    <property type="entry name" value="Ribosomal_bL32"/>
</dbReference>
<reference key="1">
    <citation type="journal article" date="1999" name="Proc. Natl. Acad. Sci. U.S.A.">
        <title>The complete chloroplast DNA sequence of the green alga Nephroselmis olivacea: insights into the architecture of ancestral chloroplast genomes.</title>
        <authorList>
            <person name="Turmel M."/>
            <person name="Otis C."/>
            <person name="Lemieux C."/>
        </authorList>
    </citation>
    <scope>NUCLEOTIDE SEQUENCE [LARGE SCALE GENOMIC DNA]</scope>
    <source>
        <strain>NIES-484 / S-N-5-8</strain>
    </source>
</reference>
<evidence type="ECO:0000255" key="1">
    <source>
        <dbReference type="HAMAP-Rule" id="MF_00340"/>
    </source>
</evidence>
<evidence type="ECO:0000256" key="2">
    <source>
        <dbReference type="SAM" id="MobiDB-lite"/>
    </source>
</evidence>
<evidence type="ECO:0000305" key="3"/>
<organism>
    <name type="scientific">Nephroselmis olivacea</name>
    <name type="common">Green alga</name>
    <dbReference type="NCBI Taxonomy" id="31312"/>
    <lineage>
        <taxon>Eukaryota</taxon>
        <taxon>Viridiplantae</taxon>
        <taxon>Chlorophyta</taxon>
        <taxon>Nephroselmidophyceae</taxon>
        <taxon>Nephroselmidales</taxon>
        <taxon>Nephroselmidaceae</taxon>
        <taxon>Nephroselmis</taxon>
    </lineage>
</organism>
<geneLocation type="chloroplast"/>
<sequence length="75" mass="8482">MAVPKKRKSKSRANSQNHVWKREIVKQARRAVSLAKALLGGNTNFLLVSPGPTTPIKPNPKKQTGRRPRSQRRRT</sequence>
<feature type="chain" id="PRO_0000276477" description="Large ribosomal subunit protein bL32c">
    <location>
        <begin position="1"/>
        <end position="75"/>
    </location>
</feature>
<feature type="region of interest" description="Disordered" evidence="2">
    <location>
        <begin position="49"/>
        <end position="75"/>
    </location>
</feature>
<feature type="compositionally biased region" description="Basic residues" evidence="2">
    <location>
        <begin position="59"/>
        <end position="75"/>
    </location>
</feature>
<gene>
    <name evidence="1" type="primary">rpl32</name>
</gene>
<protein>
    <recommendedName>
        <fullName evidence="1">Large ribosomal subunit protein bL32c</fullName>
    </recommendedName>
    <alternativeName>
        <fullName evidence="3">50S ribosomal protein L32, chloroplastic</fullName>
    </alternativeName>
</protein>
<keyword id="KW-0150">Chloroplast</keyword>
<keyword id="KW-0934">Plastid</keyword>
<keyword id="KW-0687">Ribonucleoprotein</keyword>
<keyword id="KW-0689">Ribosomal protein</keyword>
<name>RK32_NEPOL</name>
<proteinExistence type="inferred from homology"/>
<accession>Q9TKU9</accession>